<name>RLME_VIBC1</name>
<evidence type="ECO:0000255" key="1">
    <source>
        <dbReference type="HAMAP-Rule" id="MF_01547"/>
    </source>
</evidence>
<feature type="chain" id="PRO_1000087722" description="Ribosomal RNA large subunit methyltransferase E">
    <location>
        <begin position="1"/>
        <end position="209"/>
    </location>
</feature>
<feature type="active site" description="Proton acceptor" evidence="1">
    <location>
        <position position="164"/>
    </location>
</feature>
<feature type="binding site" evidence="1">
    <location>
        <position position="63"/>
    </location>
    <ligand>
        <name>S-adenosyl-L-methionine</name>
        <dbReference type="ChEBI" id="CHEBI:59789"/>
    </ligand>
</feature>
<feature type="binding site" evidence="1">
    <location>
        <position position="65"/>
    </location>
    <ligand>
        <name>S-adenosyl-L-methionine</name>
        <dbReference type="ChEBI" id="CHEBI:59789"/>
    </ligand>
</feature>
<feature type="binding site" evidence="1">
    <location>
        <position position="83"/>
    </location>
    <ligand>
        <name>S-adenosyl-L-methionine</name>
        <dbReference type="ChEBI" id="CHEBI:59789"/>
    </ligand>
</feature>
<feature type="binding site" evidence="1">
    <location>
        <position position="99"/>
    </location>
    <ligand>
        <name>S-adenosyl-L-methionine</name>
        <dbReference type="ChEBI" id="CHEBI:59789"/>
    </ligand>
</feature>
<feature type="binding site" evidence="1">
    <location>
        <position position="124"/>
    </location>
    <ligand>
        <name>S-adenosyl-L-methionine</name>
        <dbReference type="ChEBI" id="CHEBI:59789"/>
    </ligand>
</feature>
<keyword id="KW-0963">Cytoplasm</keyword>
<keyword id="KW-0489">Methyltransferase</keyword>
<keyword id="KW-0698">rRNA processing</keyword>
<keyword id="KW-0949">S-adenosyl-L-methionine</keyword>
<keyword id="KW-0808">Transferase</keyword>
<sequence>MSKQKHSASSGRWLKEHFDDKYANEARKKGYRSRAYFKIEEIQTKDKLLKSGMTVVDLGAAPGGWSQYAAKIIGEEGQIIACDLLPMDPIAGVSFLQGDFRDEAVLDALLERIQPSMVDVVMSDMAPNIAGNNSVDQPRAMYLVELALDMCRQVLAPNGSFVVKVFQGEGFDQFVKEVRDMFKVVKIRKPDSSRARSREVFVVATGYKG</sequence>
<protein>
    <recommendedName>
        <fullName evidence="1">Ribosomal RNA large subunit methyltransferase E</fullName>
        <ecNumber evidence="1">2.1.1.166</ecNumber>
    </recommendedName>
    <alternativeName>
        <fullName evidence="1">23S rRNA Um2552 methyltransferase</fullName>
    </alternativeName>
    <alternativeName>
        <fullName evidence="1">rRNA (uridine-2'-O-)-methyltransferase</fullName>
    </alternativeName>
</protein>
<comment type="function">
    <text evidence="1">Specifically methylates the uridine in position 2552 of 23S rRNA at the 2'-O position of the ribose in the fully assembled 50S ribosomal subunit.</text>
</comment>
<comment type="catalytic activity">
    <reaction evidence="1">
        <text>uridine(2552) in 23S rRNA + S-adenosyl-L-methionine = 2'-O-methyluridine(2552) in 23S rRNA + S-adenosyl-L-homocysteine + H(+)</text>
        <dbReference type="Rhea" id="RHEA:42720"/>
        <dbReference type="Rhea" id="RHEA-COMP:10202"/>
        <dbReference type="Rhea" id="RHEA-COMP:10203"/>
        <dbReference type="ChEBI" id="CHEBI:15378"/>
        <dbReference type="ChEBI" id="CHEBI:57856"/>
        <dbReference type="ChEBI" id="CHEBI:59789"/>
        <dbReference type="ChEBI" id="CHEBI:65315"/>
        <dbReference type="ChEBI" id="CHEBI:74478"/>
        <dbReference type="EC" id="2.1.1.166"/>
    </reaction>
</comment>
<comment type="subcellular location">
    <subcellularLocation>
        <location evidence="1">Cytoplasm</location>
    </subcellularLocation>
</comment>
<comment type="similarity">
    <text evidence="1">Belongs to the class I-like SAM-binding methyltransferase superfamily. RNA methyltransferase RlmE family.</text>
</comment>
<proteinExistence type="inferred from homology"/>
<reference key="1">
    <citation type="submission" date="2007-08" db="EMBL/GenBank/DDBJ databases">
        <authorList>
            <consortium name="The Vibrio harveyi Genome Sequencing Project"/>
            <person name="Bassler B."/>
            <person name="Clifton S.W."/>
            <person name="Fulton L."/>
            <person name="Delehaunty K."/>
            <person name="Fronick C."/>
            <person name="Harrison M."/>
            <person name="Markivic C."/>
            <person name="Fulton R."/>
            <person name="Tin-Wollam A.-M."/>
            <person name="Shah N."/>
            <person name="Pepin K."/>
            <person name="Nash W."/>
            <person name="Thiruvilangam P."/>
            <person name="Bhonagiri V."/>
            <person name="Waters C."/>
            <person name="Tu K.C."/>
            <person name="Irgon J."/>
            <person name="Wilson R.K."/>
        </authorList>
    </citation>
    <scope>NUCLEOTIDE SEQUENCE [LARGE SCALE GENOMIC DNA]</scope>
    <source>
        <strain>ATCC BAA-1116 / BB120</strain>
    </source>
</reference>
<gene>
    <name evidence="1" type="primary">rlmE</name>
    <name evidence="1" type="synonym">ftsJ</name>
    <name evidence="1" type="synonym">rrmJ</name>
    <name type="ordered locus">VIBHAR_03405</name>
</gene>
<accession>A7MZH4</accession>
<dbReference type="EC" id="2.1.1.166" evidence="1"/>
<dbReference type="EMBL" id="CP000789">
    <property type="protein sequence ID" value="ABU72350.1"/>
    <property type="molecule type" value="Genomic_DNA"/>
</dbReference>
<dbReference type="RefSeq" id="WP_005439450.1">
    <property type="nucleotide sequence ID" value="NC_022269.1"/>
</dbReference>
<dbReference type="SMR" id="A7MZH4"/>
<dbReference type="GeneID" id="67376375"/>
<dbReference type="KEGG" id="vha:VIBHAR_03405"/>
<dbReference type="PATRIC" id="fig|338187.25.peg.2793"/>
<dbReference type="Proteomes" id="UP000008152">
    <property type="component" value="Chromosome I"/>
</dbReference>
<dbReference type="GO" id="GO:0005737">
    <property type="term" value="C:cytoplasm"/>
    <property type="evidence" value="ECO:0007669"/>
    <property type="project" value="UniProtKB-SubCell"/>
</dbReference>
<dbReference type="GO" id="GO:0008650">
    <property type="term" value="F:rRNA (uridine-2'-O-)-methyltransferase activity"/>
    <property type="evidence" value="ECO:0007669"/>
    <property type="project" value="UniProtKB-UniRule"/>
</dbReference>
<dbReference type="FunFam" id="3.40.50.150:FF:000005">
    <property type="entry name" value="Ribosomal RNA large subunit methyltransferase E"/>
    <property type="match status" value="1"/>
</dbReference>
<dbReference type="Gene3D" id="3.40.50.150">
    <property type="entry name" value="Vaccinia Virus protein VP39"/>
    <property type="match status" value="1"/>
</dbReference>
<dbReference type="HAMAP" id="MF_01547">
    <property type="entry name" value="RNA_methyltr_E"/>
    <property type="match status" value="1"/>
</dbReference>
<dbReference type="InterPro" id="IPR050082">
    <property type="entry name" value="RNA_methyltr_RlmE"/>
</dbReference>
<dbReference type="InterPro" id="IPR002877">
    <property type="entry name" value="RNA_MeTrfase_FtsJ_dom"/>
</dbReference>
<dbReference type="InterPro" id="IPR015507">
    <property type="entry name" value="rRNA-MeTfrase_E"/>
</dbReference>
<dbReference type="InterPro" id="IPR029063">
    <property type="entry name" value="SAM-dependent_MTases_sf"/>
</dbReference>
<dbReference type="NCBIfam" id="NF008390">
    <property type="entry name" value="PRK11188.1"/>
    <property type="match status" value="1"/>
</dbReference>
<dbReference type="PANTHER" id="PTHR10920">
    <property type="entry name" value="RIBOSOMAL RNA METHYLTRANSFERASE"/>
    <property type="match status" value="1"/>
</dbReference>
<dbReference type="PANTHER" id="PTHR10920:SF18">
    <property type="entry name" value="RRNA METHYLTRANSFERASE 2, MITOCHONDRIAL"/>
    <property type="match status" value="1"/>
</dbReference>
<dbReference type="Pfam" id="PF01728">
    <property type="entry name" value="FtsJ"/>
    <property type="match status" value="1"/>
</dbReference>
<dbReference type="PIRSF" id="PIRSF005461">
    <property type="entry name" value="23S_rRNA_mtase"/>
    <property type="match status" value="1"/>
</dbReference>
<dbReference type="SUPFAM" id="SSF53335">
    <property type="entry name" value="S-adenosyl-L-methionine-dependent methyltransferases"/>
    <property type="match status" value="1"/>
</dbReference>
<organism>
    <name type="scientific">Vibrio campbellii (strain ATCC BAA-1116)</name>
    <dbReference type="NCBI Taxonomy" id="2902295"/>
    <lineage>
        <taxon>Bacteria</taxon>
        <taxon>Pseudomonadati</taxon>
        <taxon>Pseudomonadota</taxon>
        <taxon>Gammaproteobacteria</taxon>
        <taxon>Vibrionales</taxon>
        <taxon>Vibrionaceae</taxon>
        <taxon>Vibrio</taxon>
    </lineage>
</organism>